<accession>P82235</accession>
<name>BR2D_RANTE</name>
<protein>
    <recommendedName>
        <fullName>Brevinin-2Td</fullName>
    </recommendedName>
</protein>
<reference key="1">
    <citation type="journal article" date="1998" name="Biopolymers">
        <title>Antimicrobial peptides from amphibian skin: what do they tell us?</title>
        <authorList>
            <person name="Simmaco M."/>
            <person name="Mignogna G."/>
            <person name="Barra D."/>
        </authorList>
    </citation>
    <scope>PROTEIN SEQUENCE</scope>
    <source>
        <tissue>Skin secretion</tissue>
    </source>
</reference>
<proteinExistence type="evidence at protein level"/>
<evidence type="ECO:0000250" key="1"/>
<evidence type="ECO:0000305" key="2"/>
<sequence length="29" mass="3234">GLWETIKNFGKKFTLNILHNLKCKIGGGC</sequence>
<organism>
    <name type="scientific">Rana temporaria</name>
    <name type="common">European common frog</name>
    <dbReference type="NCBI Taxonomy" id="8407"/>
    <lineage>
        <taxon>Eukaryota</taxon>
        <taxon>Metazoa</taxon>
        <taxon>Chordata</taxon>
        <taxon>Craniata</taxon>
        <taxon>Vertebrata</taxon>
        <taxon>Euteleostomi</taxon>
        <taxon>Amphibia</taxon>
        <taxon>Batrachia</taxon>
        <taxon>Anura</taxon>
        <taxon>Neobatrachia</taxon>
        <taxon>Ranoidea</taxon>
        <taxon>Ranidae</taxon>
        <taxon>Rana</taxon>
        <taxon>Rana</taxon>
    </lineage>
</organism>
<comment type="function">
    <text>Antibacterial activity against representative Gram-negative and Gram-positive bacteria.</text>
</comment>
<comment type="subcellular location">
    <subcellularLocation>
        <location>Secreted</location>
    </subcellularLocation>
</comment>
<comment type="tissue specificity">
    <text>Expressed by the skin glands.</text>
</comment>
<comment type="similarity">
    <text evidence="2">Belongs to the frog skin active peptide (FSAP) family. Brevinin subfamily.</text>
</comment>
<keyword id="KW-0878">Amphibian defense peptide</keyword>
<keyword id="KW-0044">Antibiotic</keyword>
<keyword id="KW-0929">Antimicrobial</keyword>
<keyword id="KW-0903">Direct protein sequencing</keyword>
<keyword id="KW-1015">Disulfide bond</keyword>
<keyword id="KW-0964">Secreted</keyword>
<feature type="peptide" id="PRO_0000043553" description="Brevinin-2Td">
    <location>
        <begin position="1"/>
        <end position="29"/>
    </location>
</feature>
<feature type="disulfide bond" evidence="1">
    <location>
        <begin position="23"/>
        <end position="29"/>
    </location>
</feature>
<dbReference type="SMR" id="P82235"/>
<dbReference type="GO" id="GO:0005576">
    <property type="term" value="C:extracellular region"/>
    <property type="evidence" value="ECO:0007669"/>
    <property type="project" value="UniProtKB-SubCell"/>
</dbReference>
<dbReference type="GO" id="GO:0042742">
    <property type="term" value="P:defense response to bacterium"/>
    <property type="evidence" value="ECO:0007669"/>
    <property type="project" value="UniProtKB-KW"/>
</dbReference>